<accession>Q6NWY9</accession>
<accession>O75401</accession>
<accession>Q6PI09</accession>
<accession>Q6ZWB3</accession>
<accession>Q8NCZ1</accession>
<accession>Q9H5G4</accession>
<accession>Q9NT95</accession>
<gene>
    <name type="primary">PRPF40B</name>
    <name type="synonym">HYPC</name>
</gene>
<keyword id="KW-0007">Acetylation</keyword>
<keyword id="KW-0025">Alternative splicing</keyword>
<keyword id="KW-1017">Isopeptide bond</keyword>
<keyword id="KW-0507">mRNA processing</keyword>
<keyword id="KW-0508">mRNA splicing</keyword>
<keyword id="KW-0539">Nucleus</keyword>
<keyword id="KW-0597">Phosphoprotein</keyword>
<keyword id="KW-1267">Proteomics identification</keyword>
<keyword id="KW-1185">Reference proteome</keyword>
<keyword id="KW-0677">Repeat</keyword>
<keyword id="KW-0832">Ubl conjugation</keyword>
<organism>
    <name type="scientific">Homo sapiens</name>
    <name type="common">Human</name>
    <dbReference type="NCBI Taxonomy" id="9606"/>
    <lineage>
        <taxon>Eukaryota</taxon>
        <taxon>Metazoa</taxon>
        <taxon>Chordata</taxon>
        <taxon>Craniata</taxon>
        <taxon>Vertebrata</taxon>
        <taxon>Euteleostomi</taxon>
        <taxon>Mammalia</taxon>
        <taxon>Eutheria</taxon>
        <taxon>Euarchontoglires</taxon>
        <taxon>Primates</taxon>
        <taxon>Haplorrhini</taxon>
        <taxon>Catarrhini</taxon>
        <taxon>Hominidae</taxon>
        <taxon>Homo</taxon>
    </lineage>
</organism>
<dbReference type="EMBL" id="AK027117">
    <property type="protein sequence ID" value="BAB15662.1"/>
    <property type="status" value="ALT_FRAME"/>
    <property type="molecule type" value="mRNA"/>
</dbReference>
<dbReference type="EMBL" id="AK123353">
    <property type="status" value="NOT_ANNOTATED_CDS"/>
    <property type="molecule type" value="mRNA"/>
</dbReference>
<dbReference type="EMBL" id="AL137459">
    <property type="protein sequence ID" value="CAB70747.1"/>
    <property type="molecule type" value="mRNA"/>
</dbReference>
<dbReference type="EMBL" id="AL834216">
    <property type="protein sequence ID" value="CAD38898.1"/>
    <property type="molecule type" value="mRNA"/>
</dbReference>
<dbReference type="EMBL" id="CH471111">
    <property type="protein sequence ID" value="EAW58085.1"/>
    <property type="molecule type" value="Genomic_DNA"/>
</dbReference>
<dbReference type="EMBL" id="BC050398">
    <property type="protein sequence ID" value="AAH50398.1"/>
    <property type="status" value="ALT_SEQ"/>
    <property type="molecule type" value="mRNA"/>
</dbReference>
<dbReference type="EMBL" id="BC067364">
    <property type="protein sequence ID" value="AAH67364.1"/>
    <property type="molecule type" value="mRNA"/>
</dbReference>
<dbReference type="EMBL" id="AF049525">
    <property type="protein sequence ID" value="AAC27503.1"/>
    <property type="molecule type" value="mRNA"/>
</dbReference>
<dbReference type="PIR" id="T46402">
    <property type="entry name" value="T46402"/>
</dbReference>
<dbReference type="RefSeq" id="NP_001026868.2">
    <property type="nucleotide sequence ID" value="NM_001031698.2"/>
</dbReference>
<dbReference type="RefSeq" id="NP_036404.1">
    <molecule id="Q6NWY9-2"/>
    <property type="nucleotide sequence ID" value="NM_012272.3"/>
</dbReference>
<dbReference type="RefSeq" id="XP_011536443.1">
    <property type="nucleotide sequence ID" value="XM_011538141.1"/>
</dbReference>
<dbReference type="SMR" id="Q6NWY9"/>
<dbReference type="BioGRID" id="117305">
    <property type="interactions" value="23"/>
</dbReference>
<dbReference type="FunCoup" id="Q6NWY9">
    <property type="interactions" value="865"/>
</dbReference>
<dbReference type="IntAct" id="Q6NWY9">
    <property type="interactions" value="11"/>
</dbReference>
<dbReference type="MINT" id="Q6NWY9"/>
<dbReference type="STRING" id="9606.ENSP00000448073"/>
<dbReference type="GlyGen" id="Q6NWY9">
    <property type="glycosylation" value="1 site"/>
</dbReference>
<dbReference type="iPTMnet" id="Q6NWY9"/>
<dbReference type="PhosphoSitePlus" id="Q6NWY9"/>
<dbReference type="BioMuta" id="PRPF40B"/>
<dbReference type="DMDM" id="74736936"/>
<dbReference type="jPOST" id="Q6NWY9"/>
<dbReference type="MassIVE" id="Q6NWY9"/>
<dbReference type="PaxDb" id="9606-ENSP00000448073"/>
<dbReference type="PeptideAtlas" id="Q6NWY9"/>
<dbReference type="ProteomicsDB" id="66741">
    <molecule id="Q6NWY9-1"/>
</dbReference>
<dbReference type="ProteomicsDB" id="66742">
    <molecule id="Q6NWY9-2"/>
</dbReference>
<dbReference type="ProteomicsDB" id="66743">
    <molecule id="Q6NWY9-3"/>
</dbReference>
<dbReference type="Pumba" id="Q6NWY9"/>
<dbReference type="Antibodypedia" id="42895">
    <property type="antibodies" value="29 antibodies from 14 providers"/>
</dbReference>
<dbReference type="DNASU" id="25766"/>
<dbReference type="Ensembl" id="ENST00000261897.5">
    <molecule id="Q6NWY9-2"/>
    <property type="protein sequence ID" value="ENSP00000261897.1"/>
    <property type="gene ID" value="ENSG00000110844.14"/>
</dbReference>
<dbReference type="GeneID" id="25766"/>
<dbReference type="KEGG" id="hsa:25766"/>
<dbReference type="UCSC" id="uc058nrq.1">
    <molecule id="Q6NWY9-1"/>
    <property type="organism name" value="human"/>
</dbReference>
<dbReference type="AGR" id="HGNC:25031"/>
<dbReference type="CTD" id="25766"/>
<dbReference type="DisGeNET" id="25766"/>
<dbReference type="GeneCards" id="PRPF40B"/>
<dbReference type="HGNC" id="HGNC:25031">
    <property type="gene designation" value="PRPF40B"/>
</dbReference>
<dbReference type="HPA" id="ENSG00000110844">
    <property type="expression patterns" value="Low tissue specificity"/>
</dbReference>
<dbReference type="MalaCards" id="PRPF40B"/>
<dbReference type="MIM" id="621019">
    <property type="type" value="gene"/>
</dbReference>
<dbReference type="neXtProt" id="NX_Q6NWY9"/>
<dbReference type="OpenTargets" id="ENSG00000110844"/>
<dbReference type="PharmGKB" id="PA143485582"/>
<dbReference type="VEuPathDB" id="HostDB:ENSG00000110844"/>
<dbReference type="eggNOG" id="KOG0152">
    <property type="taxonomic scope" value="Eukaryota"/>
</dbReference>
<dbReference type="eggNOG" id="KOG0155">
    <property type="taxonomic scope" value="Eukaryota"/>
</dbReference>
<dbReference type="GeneTree" id="ENSGT00930000150980"/>
<dbReference type="InParanoid" id="Q6NWY9"/>
<dbReference type="OrthoDB" id="187617at2759"/>
<dbReference type="PAN-GO" id="Q6NWY9">
    <property type="GO annotations" value="4 GO annotations based on evolutionary models"/>
</dbReference>
<dbReference type="PhylomeDB" id="Q6NWY9"/>
<dbReference type="TreeFam" id="TF318732"/>
<dbReference type="PathwayCommons" id="Q6NWY9"/>
<dbReference type="SignaLink" id="Q6NWY9"/>
<dbReference type="BioGRID-ORCS" id="25766">
    <property type="hits" value="32 hits in 1158 CRISPR screens"/>
</dbReference>
<dbReference type="ChiTaRS" id="PRPF40B">
    <property type="organism name" value="human"/>
</dbReference>
<dbReference type="GeneWiki" id="PRPF40B"/>
<dbReference type="GenomeRNAi" id="25766"/>
<dbReference type="Pharos" id="Q6NWY9">
    <property type="development level" value="Tdark"/>
</dbReference>
<dbReference type="PRO" id="PR:Q6NWY9"/>
<dbReference type="Proteomes" id="UP000005640">
    <property type="component" value="Chromosome 12"/>
</dbReference>
<dbReference type="RNAct" id="Q6NWY9">
    <property type="molecule type" value="protein"/>
</dbReference>
<dbReference type="Bgee" id="ENSG00000110844">
    <property type="expression patterns" value="Expressed in right lobe of thyroid gland and 124 other cell types or tissues"/>
</dbReference>
<dbReference type="ExpressionAtlas" id="Q6NWY9">
    <property type="expression patterns" value="baseline and differential"/>
</dbReference>
<dbReference type="GO" id="GO:0016607">
    <property type="term" value="C:nuclear speck"/>
    <property type="evidence" value="ECO:0007669"/>
    <property type="project" value="UniProtKB-SubCell"/>
</dbReference>
<dbReference type="GO" id="GO:0005685">
    <property type="term" value="C:U1 snRNP"/>
    <property type="evidence" value="ECO:0000318"/>
    <property type="project" value="GO_Central"/>
</dbReference>
<dbReference type="GO" id="GO:0071004">
    <property type="term" value="C:U2-type prespliceosome"/>
    <property type="evidence" value="ECO:0000318"/>
    <property type="project" value="GO_Central"/>
</dbReference>
<dbReference type="GO" id="GO:0003723">
    <property type="term" value="F:RNA binding"/>
    <property type="evidence" value="ECO:0000318"/>
    <property type="project" value="GO_Central"/>
</dbReference>
<dbReference type="GO" id="GO:0045292">
    <property type="term" value="P:mRNA cis splicing, via spliceosome"/>
    <property type="evidence" value="ECO:0007669"/>
    <property type="project" value="InterPro"/>
</dbReference>
<dbReference type="GO" id="GO:0000398">
    <property type="term" value="P:mRNA splicing, via spliceosome"/>
    <property type="evidence" value="ECO:0000318"/>
    <property type="project" value="GO_Central"/>
</dbReference>
<dbReference type="CDD" id="cd00201">
    <property type="entry name" value="WW"/>
    <property type="match status" value="2"/>
</dbReference>
<dbReference type="FunFam" id="1.10.10.440:FF:000003">
    <property type="entry name" value="Pre-mRNA processing factor 40 homolog A"/>
    <property type="match status" value="1"/>
</dbReference>
<dbReference type="FunFam" id="1.10.10.440:FF:000002">
    <property type="entry name" value="pre-mRNA-processing factor 40 homolog A isoform X1"/>
    <property type="match status" value="1"/>
</dbReference>
<dbReference type="FunFam" id="1.10.10.440:FF:000009">
    <property type="entry name" value="pre-mRNA-processing factor 40 homolog A isoform X1"/>
    <property type="match status" value="1"/>
</dbReference>
<dbReference type="FunFam" id="1.10.10.440:FF:000016">
    <property type="entry name" value="pre-mRNA-processing factor 40 homolog B isoform X1"/>
    <property type="match status" value="1"/>
</dbReference>
<dbReference type="FunFam" id="2.20.70.10:FF:000050">
    <property type="entry name" value="pre-mRNA-processing factor 40 homolog B isoform X1"/>
    <property type="match status" value="1"/>
</dbReference>
<dbReference type="FunFam" id="2.20.70.10:FF:000052">
    <property type="entry name" value="pre-mRNA-processing factor 40 homolog B isoform X1"/>
    <property type="match status" value="1"/>
</dbReference>
<dbReference type="FunFam" id="1.10.10.440:FF:000015">
    <property type="entry name" value="pre-mRNA-processing factor 40 homolog B isoform X2"/>
    <property type="match status" value="1"/>
</dbReference>
<dbReference type="Gene3D" id="2.20.70.10">
    <property type="match status" value="2"/>
</dbReference>
<dbReference type="Gene3D" id="1.10.10.440">
    <property type="entry name" value="FF domain"/>
    <property type="match status" value="5"/>
</dbReference>
<dbReference type="InterPro" id="IPR002713">
    <property type="entry name" value="FF_domain"/>
</dbReference>
<dbReference type="InterPro" id="IPR036517">
    <property type="entry name" value="FF_domain_sf"/>
</dbReference>
<dbReference type="InterPro" id="IPR039726">
    <property type="entry name" value="Prp40-like"/>
</dbReference>
<dbReference type="InterPro" id="IPR001202">
    <property type="entry name" value="WW_dom"/>
</dbReference>
<dbReference type="InterPro" id="IPR036020">
    <property type="entry name" value="WW_dom_sf"/>
</dbReference>
<dbReference type="PANTHER" id="PTHR11864:SF1">
    <property type="entry name" value="PRE-MRNA-PROCESSING FACTOR 40 HOMOLOG B"/>
    <property type="match status" value="1"/>
</dbReference>
<dbReference type="PANTHER" id="PTHR11864">
    <property type="entry name" value="PRE-MRNA-PROCESSING PROTEIN PRP40"/>
    <property type="match status" value="1"/>
</dbReference>
<dbReference type="Pfam" id="PF01846">
    <property type="entry name" value="FF"/>
    <property type="match status" value="3"/>
</dbReference>
<dbReference type="Pfam" id="PF25432">
    <property type="entry name" value="FF_PRPF40A"/>
    <property type="match status" value="1"/>
</dbReference>
<dbReference type="Pfam" id="PF00397">
    <property type="entry name" value="WW"/>
    <property type="match status" value="2"/>
</dbReference>
<dbReference type="SMART" id="SM00441">
    <property type="entry name" value="FF"/>
    <property type="match status" value="4"/>
</dbReference>
<dbReference type="SMART" id="SM00456">
    <property type="entry name" value="WW"/>
    <property type="match status" value="2"/>
</dbReference>
<dbReference type="SUPFAM" id="SSF81698">
    <property type="entry name" value="FF domain"/>
    <property type="match status" value="5"/>
</dbReference>
<dbReference type="SUPFAM" id="SSF51045">
    <property type="entry name" value="WW domain"/>
    <property type="match status" value="2"/>
</dbReference>
<dbReference type="PROSITE" id="PS51676">
    <property type="entry name" value="FF"/>
    <property type="match status" value="6"/>
</dbReference>
<dbReference type="PROSITE" id="PS01159">
    <property type="entry name" value="WW_DOMAIN_1"/>
    <property type="match status" value="1"/>
</dbReference>
<dbReference type="PROSITE" id="PS50020">
    <property type="entry name" value="WW_DOMAIN_2"/>
    <property type="match status" value="2"/>
</dbReference>
<comment type="function">
    <text evidence="5">May be involved in pre-mRNA splicing.</text>
</comment>
<comment type="subunit">
    <text evidence="5">Interacts with the N-terminus of HD.</text>
</comment>
<comment type="interaction">
    <interactant intactId="EBI-11285481">
        <id>Q6NWY9</id>
    </interactant>
    <interactant intactId="EBI-12121668">
        <id>Q96AE4-2</id>
        <label>FUBP1</label>
    </interactant>
    <organismsDiffer>false</organismsDiffer>
    <experiments>3</experiments>
</comment>
<comment type="subcellular location">
    <subcellularLocation>
        <location evidence="4">Nucleus speckle</location>
    </subcellularLocation>
</comment>
<comment type="alternative products">
    <event type="alternative splicing"/>
    <isoform>
        <id>Q6NWY9-1</id>
        <name>1</name>
        <sequence type="displayed"/>
    </isoform>
    <isoform>
        <id>Q6NWY9-2</id>
        <name>2</name>
        <sequence type="described" ref="VSP_029117 VSP_029118"/>
    </isoform>
    <isoform>
        <id>Q6NWY9-3</id>
        <name>3</name>
        <sequence type="described" ref="VSP_029119"/>
    </isoform>
    <isoform>
        <id>Q6NWY9-4</id>
        <name>4</name>
        <sequence type="described" ref="VSP_029116 VSP_029120 VSP_029121"/>
    </isoform>
</comment>
<comment type="tissue specificity">
    <text evidence="4 5">Expressed in the striatum and cortex of the brain (at protein level). Highly expressed in testis, fetal kidney and fetal brain. Moderately expressed in pancreas, skeletal muscle, placenta, brain and heart. Weakly expressed in colon, ileum, ovary, prostate, spleen, kidney and fetal lung.</text>
</comment>
<comment type="similarity">
    <text evidence="9">Belongs to the PRPF40 family.</text>
</comment>
<comment type="sequence caution" evidence="9">
    <conflict type="miscellaneous discrepancy">
        <sequence resource="EMBL-CDS" id="AAH50398"/>
    </conflict>
    <text>Contaminating sequence. Potential poly-A sequence.</text>
</comment>
<comment type="sequence caution" evidence="9">
    <conflict type="frameshift">
        <sequence resource="EMBL-CDS" id="BAB15662"/>
    </conflict>
</comment>
<proteinExistence type="evidence at protein level"/>
<name>PR40B_HUMAN</name>
<reference key="1">
    <citation type="journal article" date="2004" name="Nat. Genet.">
        <title>Complete sequencing and characterization of 21,243 full-length human cDNAs.</title>
        <authorList>
            <person name="Ota T."/>
            <person name="Suzuki Y."/>
            <person name="Nishikawa T."/>
            <person name="Otsuki T."/>
            <person name="Sugiyama T."/>
            <person name="Irie R."/>
            <person name="Wakamatsu A."/>
            <person name="Hayashi K."/>
            <person name="Sato H."/>
            <person name="Nagai K."/>
            <person name="Kimura K."/>
            <person name="Makita H."/>
            <person name="Sekine M."/>
            <person name="Obayashi M."/>
            <person name="Nishi T."/>
            <person name="Shibahara T."/>
            <person name="Tanaka T."/>
            <person name="Ishii S."/>
            <person name="Yamamoto J."/>
            <person name="Saito K."/>
            <person name="Kawai Y."/>
            <person name="Isono Y."/>
            <person name="Nakamura Y."/>
            <person name="Nagahari K."/>
            <person name="Murakami K."/>
            <person name="Yasuda T."/>
            <person name="Iwayanagi T."/>
            <person name="Wagatsuma M."/>
            <person name="Shiratori A."/>
            <person name="Sudo H."/>
            <person name="Hosoiri T."/>
            <person name="Kaku Y."/>
            <person name="Kodaira H."/>
            <person name="Kondo H."/>
            <person name="Sugawara M."/>
            <person name="Takahashi M."/>
            <person name="Kanda K."/>
            <person name="Yokoi T."/>
            <person name="Furuya T."/>
            <person name="Kikkawa E."/>
            <person name="Omura Y."/>
            <person name="Abe K."/>
            <person name="Kamihara K."/>
            <person name="Katsuta N."/>
            <person name="Sato K."/>
            <person name="Tanikawa M."/>
            <person name="Yamazaki M."/>
            <person name="Ninomiya K."/>
            <person name="Ishibashi T."/>
            <person name="Yamashita H."/>
            <person name="Murakawa K."/>
            <person name="Fujimori K."/>
            <person name="Tanai H."/>
            <person name="Kimata M."/>
            <person name="Watanabe M."/>
            <person name="Hiraoka S."/>
            <person name="Chiba Y."/>
            <person name="Ishida S."/>
            <person name="Ono Y."/>
            <person name="Takiguchi S."/>
            <person name="Watanabe S."/>
            <person name="Yosida M."/>
            <person name="Hotuta T."/>
            <person name="Kusano J."/>
            <person name="Kanehori K."/>
            <person name="Takahashi-Fujii A."/>
            <person name="Hara H."/>
            <person name="Tanase T.-O."/>
            <person name="Nomura Y."/>
            <person name="Togiya S."/>
            <person name="Komai F."/>
            <person name="Hara R."/>
            <person name="Takeuchi K."/>
            <person name="Arita M."/>
            <person name="Imose N."/>
            <person name="Musashino K."/>
            <person name="Yuuki H."/>
            <person name="Oshima A."/>
            <person name="Sasaki N."/>
            <person name="Aotsuka S."/>
            <person name="Yoshikawa Y."/>
            <person name="Matsunawa H."/>
            <person name="Ichihara T."/>
            <person name="Shiohata N."/>
            <person name="Sano S."/>
            <person name="Moriya S."/>
            <person name="Momiyama H."/>
            <person name="Satoh N."/>
            <person name="Takami S."/>
            <person name="Terashima Y."/>
            <person name="Suzuki O."/>
            <person name="Nakagawa S."/>
            <person name="Senoh A."/>
            <person name="Mizoguchi H."/>
            <person name="Goto Y."/>
            <person name="Shimizu F."/>
            <person name="Wakebe H."/>
            <person name="Hishigaki H."/>
            <person name="Watanabe T."/>
            <person name="Sugiyama A."/>
            <person name="Takemoto M."/>
            <person name="Kawakami B."/>
            <person name="Yamazaki M."/>
            <person name="Watanabe K."/>
            <person name="Kumagai A."/>
            <person name="Itakura S."/>
            <person name="Fukuzumi Y."/>
            <person name="Fujimori Y."/>
            <person name="Komiyama M."/>
            <person name="Tashiro H."/>
            <person name="Tanigami A."/>
            <person name="Fujiwara T."/>
            <person name="Ono T."/>
            <person name="Yamada K."/>
            <person name="Fujii Y."/>
            <person name="Ozaki K."/>
            <person name="Hirao M."/>
            <person name="Ohmori Y."/>
            <person name="Kawabata A."/>
            <person name="Hikiji T."/>
            <person name="Kobatake N."/>
            <person name="Inagaki H."/>
            <person name="Ikema Y."/>
            <person name="Okamoto S."/>
            <person name="Okitani R."/>
            <person name="Kawakami T."/>
            <person name="Noguchi S."/>
            <person name="Itoh T."/>
            <person name="Shigeta K."/>
            <person name="Senba T."/>
            <person name="Matsumura K."/>
            <person name="Nakajima Y."/>
            <person name="Mizuno T."/>
            <person name="Morinaga M."/>
            <person name="Sasaki M."/>
            <person name="Togashi T."/>
            <person name="Oyama M."/>
            <person name="Hata H."/>
            <person name="Watanabe M."/>
            <person name="Komatsu T."/>
            <person name="Mizushima-Sugano J."/>
            <person name="Satoh T."/>
            <person name="Shirai Y."/>
            <person name="Takahashi Y."/>
            <person name="Nakagawa K."/>
            <person name="Okumura K."/>
            <person name="Nagase T."/>
            <person name="Nomura N."/>
            <person name="Kikuchi H."/>
            <person name="Masuho Y."/>
            <person name="Yamashita R."/>
            <person name="Nakai K."/>
            <person name="Yada T."/>
            <person name="Nakamura Y."/>
            <person name="Ohara O."/>
            <person name="Isogai T."/>
            <person name="Sugano S."/>
        </authorList>
    </citation>
    <scope>NUCLEOTIDE SEQUENCE [LARGE SCALE MRNA] (ISOFORM 4)</scope>
    <scope>NUCLEOTIDE SEQUENCE [LARGE SCALE MRNA] OF 494-871 (ISOFORM 3)</scope>
    <source>
        <tissue>Caudate nucleus</tissue>
        <tissue>Small intestine</tissue>
    </source>
</reference>
<reference key="2">
    <citation type="journal article" date="2007" name="BMC Genomics">
        <title>The full-ORF clone resource of the German cDNA consortium.</title>
        <authorList>
            <person name="Bechtel S."/>
            <person name="Rosenfelder H."/>
            <person name="Duda A."/>
            <person name="Schmidt C.P."/>
            <person name="Ernst U."/>
            <person name="Wellenreuther R."/>
            <person name="Mehrle A."/>
            <person name="Schuster C."/>
            <person name="Bahr A."/>
            <person name="Bloecker H."/>
            <person name="Heubner D."/>
            <person name="Hoerlein A."/>
            <person name="Michel G."/>
            <person name="Wedler H."/>
            <person name="Koehrer K."/>
            <person name="Ottenwaelder B."/>
            <person name="Poustka A."/>
            <person name="Wiemann S."/>
            <person name="Schupp I."/>
        </authorList>
    </citation>
    <scope>NUCLEOTIDE SEQUENCE [LARGE SCALE MRNA] (ISOFORM 2)</scope>
    <scope>NUCLEOTIDE SEQUENCE [LARGE SCALE MRNA] OF 419-871 (ISOFORM 3)</scope>
    <source>
        <tissue>Testis</tissue>
    </source>
</reference>
<reference key="3">
    <citation type="submission" date="2005-07" db="EMBL/GenBank/DDBJ databases">
        <authorList>
            <person name="Mural R.J."/>
            <person name="Istrail S."/>
            <person name="Sutton G.G."/>
            <person name="Florea L."/>
            <person name="Halpern A.L."/>
            <person name="Mobarry C.M."/>
            <person name="Lippert R."/>
            <person name="Walenz B."/>
            <person name="Shatkay H."/>
            <person name="Dew I."/>
            <person name="Miller J.R."/>
            <person name="Flanigan M.J."/>
            <person name="Edwards N.J."/>
            <person name="Bolanos R."/>
            <person name="Fasulo D."/>
            <person name="Halldorsson B.V."/>
            <person name="Hannenhalli S."/>
            <person name="Turner R."/>
            <person name="Yooseph S."/>
            <person name="Lu F."/>
            <person name="Nusskern D.R."/>
            <person name="Shue B.C."/>
            <person name="Zheng X.H."/>
            <person name="Zhong F."/>
            <person name="Delcher A.L."/>
            <person name="Huson D.H."/>
            <person name="Kravitz S.A."/>
            <person name="Mouchard L."/>
            <person name="Reinert K."/>
            <person name="Remington K.A."/>
            <person name="Clark A.G."/>
            <person name="Waterman M.S."/>
            <person name="Eichler E.E."/>
            <person name="Adams M.D."/>
            <person name="Hunkapiller M.W."/>
            <person name="Myers E.W."/>
            <person name="Venter J.C."/>
        </authorList>
    </citation>
    <scope>NUCLEOTIDE SEQUENCE [LARGE SCALE GENOMIC DNA]</scope>
</reference>
<reference key="4">
    <citation type="journal article" date="2004" name="Genome Res.">
        <title>The status, quality, and expansion of the NIH full-length cDNA project: the Mammalian Gene Collection (MGC).</title>
        <authorList>
            <consortium name="The MGC Project Team"/>
        </authorList>
    </citation>
    <scope>NUCLEOTIDE SEQUENCE [LARGE SCALE MRNA] (ISOFORM 1)</scope>
    <scope>NUCLEOTIDE SEQUENCE [LARGE SCALE MRNA] OF 1-785 (ISOFORM 3)</scope>
    <source>
        <tissue>Ovary</tissue>
        <tissue>Skin</tissue>
    </source>
</reference>
<reference key="5">
    <citation type="journal article" date="1998" name="Hum. Mol. Genet.">
        <title>Huntingtin interacts with a family of WW domain proteins.</title>
        <authorList>
            <person name="Faber P.W."/>
            <person name="Barnes G.T."/>
            <person name="Srinidhi J."/>
            <person name="Chen J."/>
            <person name="Gusella J.F."/>
            <person name="MacDonald M.E."/>
        </authorList>
    </citation>
    <scope>NUCLEOTIDE SEQUENCE [MRNA] OF 36-179 (ISOFORMS 1/2/3)</scope>
    <scope>FUNCTION</scope>
    <scope>INTERACTION WITH HD</scope>
    <scope>TISSUE SPECIFICITY</scope>
    <source>
        <tissue>Testis</tissue>
    </source>
</reference>
<reference key="6">
    <citation type="journal article" date="2000" name="Hum. Mol. Genet.">
        <title>Huntingtin's WW domain partners in Huntington's disease post-mortem brain fulfill genetic criteria for direct involvement in Huntington's disease pathogenesis.</title>
        <authorList>
            <person name="Passani L.A."/>
            <person name="Bedford M.T."/>
            <person name="Faber P.W."/>
            <person name="McGinnis K.M."/>
            <person name="Sharp A.H."/>
            <person name="Gusella J.F."/>
            <person name="Vonsattel J.-P."/>
            <person name="MacDonald M.E."/>
        </authorList>
    </citation>
    <scope>TISSUE SPECIFICITY</scope>
    <scope>SUBCELLULAR LOCATION</scope>
</reference>
<reference key="7">
    <citation type="journal article" date="2009" name="Science">
        <title>Lysine acetylation targets protein complexes and co-regulates major cellular functions.</title>
        <authorList>
            <person name="Choudhary C."/>
            <person name="Kumar C."/>
            <person name="Gnad F."/>
            <person name="Nielsen M.L."/>
            <person name="Rehman M."/>
            <person name="Walther T.C."/>
            <person name="Olsen J.V."/>
            <person name="Mann M."/>
        </authorList>
    </citation>
    <scope>ACETYLATION [LARGE SCALE ANALYSIS] AT LYS-148</scope>
    <scope>IDENTIFICATION BY MASS SPECTROMETRY [LARGE SCALE ANALYSIS]</scope>
</reference>
<reference key="8">
    <citation type="journal article" date="2011" name="Sci. Signal.">
        <title>System-wide temporal characterization of the proteome and phosphoproteome of human embryonic stem cell differentiation.</title>
        <authorList>
            <person name="Rigbolt K.T."/>
            <person name="Prokhorova T.A."/>
            <person name="Akimov V."/>
            <person name="Henningsen J."/>
            <person name="Johansen P.T."/>
            <person name="Kratchmarova I."/>
            <person name="Kassem M."/>
            <person name="Mann M."/>
            <person name="Olsen J.V."/>
            <person name="Blagoev B."/>
        </authorList>
    </citation>
    <scope>PHOSPHORYLATION [LARGE SCALE ANALYSIS] AT SER-764</scope>
    <scope>IDENTIFICATION BY MASS SPECTROMETRY [LARGE SCALE ANALYSIS]</scope>
</reference>
<reference key="9">
    <citation type="journal article" date="2013" name="J. Proteome Res.">
        <title>Toward a comprehensive characterization of a human cancer cell phosphoproteome.</title>
        <authorList>
            <person name="Zhou H."/>
            <person name="Di Palma S."/>
            <person name="Preisinger C."/>
            <person name="Peng M."/>
            <person name="Polat A.N."/>
            <person name="Heck A.J."/>
            <person name="Mohammed S."/>
        </authorList>
    </citation>
    <scope>PHOSPHORYLATION [LARGE SCALE ANALYSIS] AT SER-832</scope>
    <scope>IDENTIFICATION BY MASS SPECTROMETRY [LARGE SCALE ANALYSIS]</scope>
    <source>
        <tissue>Cervix carcinoma</tissue>
        <tissue>Erythroleukemia</tissue>
    </source>
</reference>
<reference key="10">
    <citation type="journal article" date="2014" name="J. Proteomics">
        <title>An enzyme assisted RP-RPLC approach for in-depth analysis of human liver phosphoproteome.</title>
        <authorList>
            <person name="Bian Y."/>
            <person name="Song C."/>
            <person name="Cheng K."/>
            <person name="Dong M."/>
            <person name="Wang F."/>
            <person name="Huang J."/>
            <person name="Sun D."/>
            <person name="Wang L."/>
            <person name="Ye M."/>
            <person name="Zou H."/>
        </authorList>
    </citation>
    <scope>PHOSPHORYLATION [LARGE SCALE ANALYSIS] AT SER-764</scope>
    <scope>IDENTIFICATION BY MASS SPECTROMETRY [LARGE SCALE ANALYSIS]</scope>
    <source>
        <tissue>Liver</tissue>
    </source>
</reference>
<reference key="11">
    <citation type="journal article" date="2015" name="Mol. Cell. Proteomics">
        <title>System-wide analysis of SUMOylation dynamics in response to replication stress reveals novel small ubiquitin-like modified target proteins and acceptor lysines relevant for genome stability.</title>
        <authorList>
            <person name="Xiao Z."/>
            <person name="Chang J.G."/>
            <person name="Hendriks I.A."/>
            <person name="Sigurdsson J.O."/>
            <person name="Olsen J.V."/>
            <person name="Vertegaal A.C."/>
        </authorList>
    </citation>
    <scope>SUMOYLATION [LARGE SCALE ANALYSIS] AT LYS-838</scope>
    <scope>IDENTIFICATION BY MASS SPECTROMETRY [LARGE SCALE ANALYSIS]</scope>
</reference>
<reference key="12">
    <citation type="journal article" date="2017" name="Nat. Struct. Mol. Biol.">
        <title>Site-specific mapping of the human SUMO proteome reveals co-modification with phosphorylation.</title>
        <authorList>
            <person name="Hendriks I.A."/>
            <person name="Lyon D."/>
            <person name="Young C."/>
            <person name="Jensen L.J."/>
            <person name="Vertegaal A.C."/>
            <person name="Nielsen M.L."/>
        </authorList>
    </citation>
    <scope>SUMOYLATION [LARGE SCALE ANALYSIS] AT LYS-175 AND LYS-838</scope>
    <scope>IDENTIFICATION BY MASS SPECTROMETRY [LARGE SCALE ANALYSIS]</scope>
</reference>
<feature type="chain" id="PRO_0000309282" description="Pre-mRNA-processing factor 40 homolog B">
    <location>
        <begin position="1"/>
        <end position="871"/>
    </location>
</feature>
<feature type="domain" description="WW 1" evidence="2">
    <location>
        <begin position="92"/>
        <end position="125"/>
    </location>
</feature>
<feature type="domain" description="WW 2" evidence="2">
    <location>
        <begin position="133"/>
        <end position="166"/>
    </location>
</feature>
<feature type="domain" description="FF 1">
    <location>
        <begin position="276"/>
        <end position="330"/>
    </location>
</feature>
<feature type="domain" description="FF 2">
    <location>
        <begin position="340"/>
        <end position="397"/>
    </location>
</feature>
<feature type="domain" description="FF 3">
    <location>
        <begin position="410"/>
        <end position="470"/>
    </location>
</feature>
<feature type="domain" description="FF 4">
    <location>
        <begin position="490"/>
        <end position="550"/>
    </location>
</feature>
<feature type="domain" description="FF 5">
    <location>
        <begin position="554"/>
        <end position="610"/>
    </location>
</feature>
<feature type="domain" description="FF 6">
    <location>
        <begin position="625"/>
        <end position="682"/>
    </location>
</feature>
<feature type="region of interest" description="Disordered" evidence="3">
    <location>
        <begin position="171"/>
        <end position="277"/>
    </location>
</feature>
<feature type="region of interest" description="Disordered" evidence="3">
    <location>
        <begin position="690"/>
        <end position="871"/>
    </location>
</feature>
<feature type="compositionally biased region" description="Low complexity" evidence="3">
    <location>
        <begin position="182"/>
        <end position="191"/>
    </location>
</feature>
<feature type="compositionally biased region" description="Pro residues" evidence="3">
    <location>
        <begin position="192"/>
        <end position="211"/>
    </location>
</feature>
<feature type="compositionally biased region" description="Low complexity" evidence="3">
    <location>
        <begin position="212"/>
        <end position="221"/>
    </location>
</feature>
<feature type="compositionally biased region" description="Low complexity" evidence="3">
    <location>
        <begin position="245"/>
        <end position="255"/>
    </location>
</feature>
<feature type="compositionally biased region" description="Basic residues" evidence="3">
    <location>
        <begin position="691"/>
        <end position="711"/>
    </location>
</feature>
<feature type="compositionally biased region" description="Low complexity" evidence="3">
    <location>
        <begin position="739"/>
        <end position="756"/>
    </location>
</feature>
<feature type="compositionally biased region" description="Basic residues" evidence="3">
    <location>
        <begin position="777"/>
        <end position="793"/>
    </location>
</feature>
<feature type="compositionally biased region" description="Basic and acidic residues" evidence="3">
    <location>
        <begin position="803"/>
        <end position="824"/>
    </location>
</feature>
<feature type="modified residue" description="N6-acetyllysine" evidence="10">
    <location>
        <position position="148"/>
    </location>
</feature>
<feature type="modified residue" description="Phosphoserine" evidence="11 13">
    <location>
        <position position="764"/>
    </location>
</feature>
<feature type="modified residue" description="Phosphoserine" evidence="12">
    <location>
        <position position="832"/>
    </location>
</feature>
<feature type="modified residue" description="Phosphoserine" evidence="1">
    <location>
        <position position="852"/>
    </location>
</feature>
<feature type="cross-link" description="Glycyl lysine isopeptide (Lys-Gly) (interchain with G-Cter in SUMO2)" evidence="15">
    <location>
        <position position="175"/>
    </location>
</feature>
<feature type="cross-link" description="Glycyl lysine isopeptide (Lys-Gly) (interchain with G-Cter in SUMO2)" evidence="14 15">
    <location>
        <position position="838"/>
    </location>
</feature>
<feature type="splice variant" id="VSP_029117" description="In isoform 2." evidence="8">
    <original>MMPPPFM</original>
    <variation>M</variation>
    <location>
        <begin position="1"/>
        <end position="7"/>
    </location>
</feature>
<feature type="splice variant" id="VSP_029116" description="In isoform 4." evidence="6">
    <original>MMPPPF</original>
    <variation>M</variation>
    <location>
        <begin position="1"/>
        <end position="6"/>
    </location>
</feature>
<feature type="splice variant" id="VSP_029120" description="In isoform 4." evidence="6">
    <original>TAPGADTASSAVAGTGPPRALWSEHVAPDGRIYYYNADDKQSVWEKPSVLKSKAELLLSQCPWKEYKSDTGKPYYYNNQSKESRWTRPKDLDDLEVLVKQEAAGKQQQQLPQTLQPQPPQPQPD</original>
    <variation>VSTRGQQVAGSALQSRESDLECRTMTSILSLFSSHPPRSPAALPTLKSFSPAMYSALLVSHSSPKAYTFSCYSRALSSSLKEHTYPHRATHCGHMNIVLHILFVPRRVSSTWGSCCAFLCYRSV</variation>
    <location>
        <begin position="77"/>
        <end position="200"/>
    </location>
</feature>
<feature type="splice variant" id="VSP_029121" description="In isoform 4." evidence="6">
    <location>
        <begin position="201"/>
        <end position="871"/>
    </location>
</feature>
<feature type="splice variant" id="VSP_029118" description="In isoform 2." evidence="8">
    <location>
        <begin position="568"/>
        <end position="574"/>
    </location>
</feature>
<feature type="splice variant" id="VSP_029119" description="In isoform 3." evidence="6 7 8">
    <location>
        <position position="685"/>
    </location>
</feature>
<sequence length="871" mass="99358">MMPPPFMPPPGIPPPFPPMGLPPMSQRPPAIPPMPPGILPPMLPPMGAPPPLTQIPGMVPPMMPGMLMPAVPVTAATAPGADTASSAVAGTGPPRALWSEHVAPDGRIYYYNADDKQSVWEKPSVLKSKAELLLSQCPWKEYKSDTGKPYYYNNQSKESRWTRPKDLDDLEVLVKQEAAGKQQQQLPQTLQPQPPQPQPDPPPVPPGPTPVPTGLLEPEPGGSEDCDVLEATQPLEQGFLQQLEEGPSSSGQHQPQQEEEESKPEPERSGLSWSNREKAKQAFKELLRDKAVPSNASWEQAMKMVVTDPRYSALPKLSEKKQAFNAYKAQREKEEKEEARLRAKEAKQTLQHFLEQHERMTSTTRYRRAEQTFGELEVWAVVPERDRKEVYDDVLFFLAKKEKEQAKQLRRRNIQALKSILDGMSSVNFQTTWSQAQQYLMDNPSFAQDHQLQNMDKEDALICFEEHIRALEREEEEERERARLRERRQQRKNREAFQTFLDELHETGQLHSMSTWMELYPAVSTDVRFANMLGQPGSTPLDLFKFYVEELKARFHDEKKIIKDILKDRGFCVEVNTAFEDFAHVISFDKRAAALDAGNIKLTFNSLLEKAEAREREREKEEARRMRRREAAFRSMLRQAVPALELGTAWEEVRERFVCDSAFEQITLESERIRLFREFLQVLEQTECQHLHTKGRKHGRKGKKHHHKRSHSPSGSESEEEELPPPSLRPPKRRRRNPSESGSEPSSSLDSVESGGAALGGRGSPSSHLLGADHGLRKAKKPKKKTKKRRHKSNSPESETDPEEKAGKESDEKEQEQDKDRELQQAELPNRSPGFGIKKEKTGWDTSESELSEGELERRRRTLLQQLDDHQ</sequence>
<evidence type="ECO:0000250" key="1">
    <source>
        <dbReference type="UniProtKB" id="Q80W14"/>
    </source>
</evidence>
<evidence type="ECO:0000255" key="2">
    <source>
        <dbReference type="PROSITE-ProRule" id="PRU00224"/>
    </source>
</evidence>
<evidence type="ECO:0000256" key="3">
    <source>
        <dbReference type="SAM" id="MobiDB-lite"/>
    </source>
</evidence>
<evidence type="ECO:0000269" key="4">
    <source>
    </source>
</evidence>
<evidence type="ECO:0000269" key="5">
    <source>
    </source>
</evidence>
<evidence type="ECO:0000303" key="6">
    <source>
    </source>
</evidence>
<evidence type="ECO:0000303" key="7">
    <source>
    </source>
</evidence>
<evidence type="ECO:0000303" key="8">
    <source>
    </source>
</evidence>
<evidence type="ECO:0000305" key="9"/>
<evidence type="ECO:0007744" key="10">
    <source>
    </source>
</evidence>
<evidence type="ECO:0007744" key="11">
    <source>
    </source>
</evidence>
<evidence type="ECO:0007744" key="12">
    <source>
    </source>
</evidence>
<evidence type="ECO:0007744" key="13">
    <source>
    </source>
</evidence>
<evidence type="ECO:0007744" key="14">
    <source>
    </source>
</evidence>
<evidence type="ECO:0007744" key="15">
    <source>
    </source>
</evidence>
<protein>
    <recommendedName>
        <fullName>Pre-mRNA-processing factor 40 homolog B</fullName>
    </recommendedName>
    <alternativeName>
        <fullName>Huntingtin yeast partner C</fullName>
    </alternativeName>
    <alternativeName>
        <fullName>Huntingtin-interacting protein C</fullName>
    </alternativeName>
</protein>